<accession>Q5ZK40</accession>
<gene>
    <name type="primary">SMARCB1</name>
    <name type="ORF">RCJMB04_13f19</name>
</gene>
<dbReference type="EMBL" id="AJ720244">
    <property type="protein sequence ID" value="CAG31903.1"/>
    <property type="molecule type" value="mRNA"/>
</dbReference>
<dbReference type="RefSeq" id="NP_001034344.1">
    <property type="nucleotide sequence ID" value="NM_001039255.1"/>
</dbReference>
<dbReference type="SMR" id="Q5ZK40"/>
<dbReference type="FunCoup" id="Q5ZK40">
    <property type="interactions" value="1067"/>
</dbReference>
<dbReference type="STRING" id="9031.ENSGALP00000009608"/>
<dbReference type="PaxDb" id="9031-ENSGALP00000009608"/>
<dbReference type="Ensembl" id="ENSGALT00010063409.1">
    <property type="protein sequence ID" value="ENSGALP00010039139.1"/>
    <property type="gene ID" value="ENSGALG00010025998.1"/>
</dbReference>
<dbReference type="GeneID" id="769489"/>
<dbReference type="KEGG" id="gga:769489"/>
<dbReference type="CTD" id="6598"/>
<dbReference type="VEuPathDB" id="HostDB:geneid_769489"/>
<dbReference type="eggNOG" id="KOG1649">
    <property type="taxonomic scope" value="Eukaryota"/>
</dbReference>
<dbReference type="GeneTree" id="ENSGT00440000038585"/>
<dbReference type="HOGENOM" id="CLU_035084_0_0_1"/>
<dbReference type="InParanoid" id="Q5ZK40"/>
<dbReference type="OMA" id="PPWVPTM"/>
<dbReference type="OrthoDB" id="515064at2759"/>
<dbReference type="PhylomeDB" id="Q5ZK40"/>
<dbReference type="TreeFam" id="TF105993"/>
<dbReference type="Reactome" id="R-GGA-8939243">
    <property type="pathway name" value="RUNX1 interacts with co-factors whose precise effect on RUNX1 targets is not known"/>
</dbReference>
<dbReference type="PRO" id="PR:Q5ZK40"/>
<dbReference type="Proteomes" id="UP000000539">
    <property type="component" value="Chromosome 15"/>
</dbReference>
<dbReference type="Bgee" id="ENSGALG00000005983">
    <property type="expression patterns" value="Expressed in ovary and 12 other cell types or tissues"/>
</dbReference>
<dbReference type="GO" id="GO:0035060">
    <property type="term" value="C:brahma complex"/>
    <property type="evidence" value="ECO:0000318"/>
    <property type="project" value="GO_Central"/>
</dbReference>
<dbReference type="GO" id="GO:0001650">
    <property type="term" value="C:fibrillar center"/>
    <property type="evidence" value="ECO:0007669"/>
    <property type="project" value="Ensembl"/>
</dbReference>
<dbReference type="GO" id="GO:0043073">
    <property type="term" value="C:germ cell nucleus"/>
    <property type="evidence" value="ECO:0007669"/>
    <property type="project" value="Ensembl"/>
</dbReference>
<dbReference type="GO" id="GO:0071565">
    <property type="term" value="C:nBAF complex"/>
    <property type="evidence" value="ECO:0000318"/>
    <property type="project" value="GO_Central"/>
</dbReference>
<dbReference type="GO" id="GO:0071564">
    <property type="term" value="C:npBAF complex"/>
    <property type="evidence" value="ECO:0000318"/>
    <property type="project" value="GO_Central"/>
</dbReference>
<dbReference type="GO" id="GO:0000228">
    <property type="term" value="C:nuclear chromosome"/>
    <property type="evidence" value="ECO:0007669"/>
    <property type="project" value="InterPro"/>
</dbReference>
<dbReference type="GO" id="GO:0005654">
    <property type="term" value="C:nucleoplasm"/>
    <property type="evidence" value="ECO:0007669"/>
    <property type="project" value="Ensembl"/>
</dbReference>
<dbReference type="GO" id="GO:0005634">
    <property type="term" value="C:nucleus"/>
    <property type="evidence" value="ECO:0000318"/>
    <property type="project" value="GO_Central"/>
</dbReference>
<dbReference type="GO" id="GO:0016514">
    <property type="term" value="C:SWI/SNF complex"/>
    <property type="evidence" value="ECO:0007669"/>
    <property type="project" value="Ensembl"/>
</dbReference>
<dbReference type="GO" id="GO:0003677">
    <property type="term" value="F:DNA binding"/>
    <property type="evidence" value="ECO:0000250"/>
    <property type="project" value="UniProtKB"/>
</dbReference>
<dbReference type="GO" id="GO:0042802">
    <property type="term" value="F:identical protein binding"/>
    <property type="evidence" value="ECO:0007669"/>
    <property type="project" value="Ensembl"/>
</dbReference>
<dbReference type="GO" id="GO:0002039">
    <property type="term" value="F:p53 binding"/>
    <property type="evidence" value="ECO:0007669"/>
    <property type="project" value="Ensembl"/>
</dbReference>
<dbReference type="GO" id="GO:0001164">
    <property type="term" value="F:RNA polymerase I core promoter sequence-specific DNA binding"/>
    <property type="evidence" value="ECO:0007669"/>
    <property type="project" value="Ensembl"/>
</dbReference>
<dbReference type="GO" id="GO:0030957">
    <property type="term" value="F:Tat protein binding"/>
    <property type="evidence" value="ECO:0007669"/>
    <property type="project" value="Ensembl"/>
</dbReference>
<dbReference type="GO" id="GO:0003713">
    <property type="term" value="F:transcription coactivator activity"/>
    <property type="evidence" value="ECO:0000318"/>
    <property type="project" value="GO_Central"/>
</dbReference>
<dbReference type="GO" id="GO:0006338">
    <property type="term" value="P:chromatin remodeling"/>
    <property type="evidence" value="ECO:0000318"/>
    <property type="project" value="GO_Central"/>
</dbReference>
<dbReference type="GO" id="GO:0070365">
    <property type="term" value="P:hepatocyte differentiation"/>
    <property type="evidence" value="ECO:0007669"/>
    <property type="project" value="Ensembl"/>
</dbReference>
<dbReference type="GO" id="GO:0008285">
    <property type="term" value="P:negative regulation of cell population proliferation"/>
    <property type="evidence" value="ECO:0007669"/>
    <property type="project" value="Ensembl"/>
</dbReference>
<dbReference type="GO" id="GO:0007399">
    <property type="term" value="P:nervous system development"/>
    <property type="evidence" value="ECO:0007669"/>
    <property type="project" value="UniProtKB-KW"/>
</dbReference>
<dbReference type="GO" id="GO:0006337">
    <property type="term" value="P:nucleosome disassembly"/>
    <property type="evidence" value="ECO:0007669"/>
    <property type="project" value="Ensembl"/>
</dbReference>
<dbReference type="GO" id="GO:0043923">
    <property type="term" value="P:positive regulation by host of viral transcription"/>
    <property type="evidence" value="ECO:0007669"/>
    <property type="project" value="Ensembl"/>
</dbReference>
<dbReference type="GO" id="GO:1902661">
    <property type="term" value="P:positive regulation of glucose mediated signaling pathway"/>
    <property type="evidence" value="ECO:0007669"/>
    <property type="project" value="Ensembl"/>
</dbReference>
<dbReference type="GO" id="GO:0045944">
    <property type="term" value="P:positive regulation of transcription by RNA polymerase II"/>
    <property type="evidence" value="ECO:0007669"/>
    <property type="project" value="Ensembl"/>
</dbReference>
<dbReference type="GO" id="GO:1901838">
    <property type="term" value="P:positive regulation of transcription of nucleolar large rRNA by RNA polymerase I"/>
    <property type="evidence" value="ECO:0007669"/>
    <property type="project" value="Ensembl"/>
</dbReference>
<dbReference type="GO" id="GO:0006357">
    <property type="term" value="P:regulation of transcription by RNA polymerase II"/>
    <property type="evidence" value="ECO:0000318"/>
    <property type="project" value="GO_Central"/>
</dbReference>
<dbReference type="GO" id="GO:0039692">
    <property type="term" value="P:single stranded viral RNA replication via double stranded DNA intermediate"/>
    <property type="evidence" value="ECO:0007669"/>
    <property type="project" value="Ensembl"/>
</dbReference>
<dbReference type="GO" id="GO:0045815">
    <property type="term" value="P:transcription initiation-coupled chromatin remodeling"/>
    <property type="evidence" value="ECO:0007669"/>
    <property type="project" value="Ensembl"/>
</dbReference>
<dbReference type="CDD" id="cd21086">
    <property type="entry name" value="WH_NTD_SMARCB1"/>
    <property type="match status" value="1"/>
</dbReference>
<dbReference type="InterPro" id="IPR048664">
    <property type="entry name" value="INI1_DNA-bd"/>
</dbReference>
<dbReference type="InterPro" id="IPR017393">
    <property type="entry name" value="Sfh1/SNF5"/>
</dbReference>
<dbReference type="InterPro" id="IPR006939">
    <property type="entry name" value="SNF5"/>
</dbReference>
<dbReference type="PANTHER" id="PTHR10019">
    <property type="entry name" value="SNF5"/>
    <property type="match status" value="1"/>
</dbReference>
<dbReference type="Pfam" id="PF21459">
    <property type="entry name" value="INI1_DNA-bd"/>
    <property type="match status" value="1"/>
</dbReference>
<dbReference type="Pfam" id="PF04855">
    <property type="entry name" value="SNF5"/>
    <property type="match status" value="1"/>
</dbReference>
<dbReference type="PIRSF" id="PIRSF038126">
    <property type="entry name" value="SWI_SNF"/>
    <property type="match status" value="1"/>
</dbReference>
<comment type="function">
    <text evidence="2">Involved in chromatin-remodeling. Core component of the BAF (SWI/SNF) complex. This ATP-dependent chromatin-remodeling complex plays important roles in cell proliferation and differentiation, in cellular antiviral activities and inhibition of tumor formation. Belongs to the neural progenitors-specific chromatin remodeling complex (npBAF complex) and the neuron-specific chromatin remodeling complex (nBAF complex) and may play a role in neural development (By similarity).</text>
</comment>
<comment type="subunit">
    <text evidence="2 3">Component of the multiprotein chromatin-remodeling complexes SWI/SNF. Component of neural progenitors-specific chromatin remodeling complex (npBAF complex) and the neuron-specific chromatin remodeling complex (nBAF complex) (By similarity). Component of the BAF (SWI/SNF) chromatin remodeling complex. Component of the SWI/SNF-B (PBAF) chromatin remodeling complex. Binds to double-stranded DNA.</text>
</comment>
<comment type="subcellular location">
    <subcellularLocation>
        <location evidence="1">Nucleus</location>
    </subcellularLocation>
</comment>
<comment type="domain">
    <text evidence="2">The N-terminal DNA-binding region is structurally similar to winged helix domains.</text>
</comment>
<comment type="similarity">
    <text evidence="4">Belongs to the SNF5 family.</text>
</comment>
<feature type="chain" id="PRO_0000205950" description="SWI/SNF-related matrix-associated actin-dependent regulator of chromatin subfamily B member 1">
    <location>
        <begin position="1"/>
        <end position="386"/>
    </location>
</feature>
<feature type="region of interest" description="DNA-binding" evidence="2">
    <location>
        <begin position="1"/>
        <end position="114"/>
    </location>
</feature>
<protein>
    <recommendedName>
        <fullName>SWI/SNF-related matrix-associated actin-dependent regulator of chromatin subfamily B member 1</fullName>
    </recommendedName>
</protein>
<name>SNF5_CHICK</name>
<proteinExistence type="evidence at transcript level"/>
<sequence length="386" mass="44496">MMMMALSKTFGQKPVKFQLEEDGEFYMIGSEVGNYLRMFRGSLYKRYPSLWRRLATVEERKKIVASSHENQRSHSPRRYHGYTTLATSVTLLKASEVEEILDGNDEKYKAVSISTEPPTYLREQKAKRNNQWVPTLPNSSHHLDAVPCSTTINRNRMGRDKKRTFPLCFDDHDPAVIHENASQPEVLVPIRLDMEIDGQKLRDAFTWNMNEKLMTPEMFSEILCDDLDLNPLTFVPAIASAIRQQIESYPTDSILEDQSDQRVIIKLNIHVGNISLVDQFEWDMSEKENSPEKFALKLCSELGLGGEFVTTIAYSIRGQLSWHQKTYAFSENPLPTVEIAIRNTGDADQWCPLLETLTDAEMEKKIRDQDRNTRRMRRLANTAPAW</sequence>
<keyword id="KW-0010">Activator</keyword>
<keyword id="KW-0238">DNA-binding</keyword>
<keyword id="KW-0524">Neurogenesis</keyword>
<keyword id="KW-0539">Nucleus</keyword>
<keyword id="KW-1185">Reference proteome</keyword>
<keyword id="KW-0804">Transcription</keyword>
<keyword id="KW-0805">Transcription regulation</keyword>
<organism>
    <name type="scientific">Gallus gallus</name>
    <name type="common">Chicken</name>
    <dbReference type="NCBI Taxonomy" id="9031"/>
    <lineage>
        <taxon>Eukaryota</taxon>
        <taxon>Metazoa</taxon>
        <taxon>Chordata</taxon>
        <taxon>Craniata</taxon>
        <taxon>Vertebrata</taxon>
        <taxon>Euteleostomi</taxon>
        <taxon>Archelosauria</taxon>
        <taxon>Archosauria</taxon>
        <taxon>Dinosauria</taxon>
        <taxon>Saurischia</taxon>
        <taxon>Theropoda</taxon>
        <taxon>Coelurosauria</taxon>
        <taxon>Aves</taxon>
        <taxon>Neognathae</taxon>
        <taxon>Galloanserae</taxon>
        <taxon>Galliformes</taxon>
        <taxon>Phasianidae</taxon>
        <taxon>Phasianinae</taxon>
        <taxon>Gallus</taxon>
    </lineage>
</organism>
<reference key="1">
    <citation type="journal article" date="2005" name="Genome Biol.">
        <title>Full-length cDNAs from chicken bursal lymphocytes to facilitate gene function analysis.</title>
        <authorList>
            <person name="Caldwell R.B."/>
            <person name="Kierzek A.M."/>
            <person name="Arakawa H."/>
            <person name="Bezzubov Y."/>
            <person name="Zaim J."/>
            <person name="Fiedler P."/>
            <person name="Kutter S."/>
            <person name="Blagodatski A."/>
            <person name="Kostovska D."/>
            <person name="Koter M."/>
            <person name="Plachy J."/>
            <person name="Carninci P."/>
            <person name="Hayashizaki Y."/>
            <person name="Buerstedde J.-M."/>
        </authorList>
    </citation>
    <scope>NUCLEOTIDE SEQUENCE [LARGE SCALE MRNA]</scope>
    <source>
        <strain>CB</strain>
        <tissue>Bursa of Fabricius</tissue>
    </source>
</reference>
<evidence type="ECO:0000250" key="1"/>
<evidence type="ECO:0000250" key="2">
    <source>
        <dbReference type="UniProtKB" id="Q12824"/>
    </source>
</evidence>
<evidence type="ECO:0000250" key="3">
    <source>
        <dbReference type="UniProtKB" id="Q9Z0H3"/>
    </source>
</evidence>
<evidence type="ECO:0000305" key="4"/>